<feature type="chain" id="PRO_1000122205" description="Integration host factor subunit beta">
    <location>
        <begin position="1"/>
        <end position="107"/>
    </location>
</feature>
<feature type="region of interest" description="Disordered" evidence="2">
    <location>
        <begin position="54"/>
        <end position="107"/>
    </location>
</feature>
<feature type="compositionally biased region" description="Basic and acidic residues" evidence="2">
    <location>
        <begin position="65"/>
        <end position="101"/>
    </location>
</feature>
<evidence type="ECO:0000255" key="1">
    <source>
        <dbReference type="HAMAP-Rule" id="MF_00381"/>
    </source>
</evidence>
<evidence type="ECO:0000256" key="2">
    <source>
        <dbReference type="SAM" id="MobiDB-lite"/>
    </source>
</evidence>
<keyword id="KW-0233">DNA recombination</keyword>
<keyword id="KW-0238">DNA-binding</keyword>
<keyword id="KW-0804">Transcription</keyword>
<keyword id="KW-0805">Transcription regulation</keyword>
<keyword id="KW-0810">Translation regulation</keyword>
<name>IHFB_BURTA</name>
<reference key="1">
    <citation type="journal article" date="2005" name="BMC Genomics">
        <title>Bacterial genome adaptation to niches: divergence of the potential virulence genes in three Burkholderia species of different survival strategies.</title>
        <authorList>
            <person name="Kim H.S."/>
            <person name="Schell M.A."/>
            <person name="Yu Y."/>
            <person name="Ulrich R.L."/>
            <person name="Sarria S.H."/>
            <person name="Nierman W.C."/>
            <person name="DeShazer D."/>
        </authorList>
    </citation>
    <scope>NUCLEOTIDE SEQUENCE [LARGE SCALE GENOMIC DNA]</scope>
    <source>
        <strain>ATCC 700388 / DSM 13276 / CCUG 48851 / CIP 106301 / E264</strain>
    </source>
</reference>
<organism>
    <name type="scientific">Burkholderia thailandensis (strain ATCC 700388 / DSM 13276 / CCUG 48851 / CIP 106301 / E264)</name>
    <dbReference type="NCBI Taxonomy" id="271848"/>
    <lineage>
        <taxon>Bacteria</taxon>
        <taxon>Pseudomonadati</taxon>
        <taxon>Pseudomonadota</taxon>
        <taxon>Betaproteobacteria</taxon>
        <taxon>Burkholderiales</taxon>
        <taxon>Burkholderiaceae</taxon>
        <taxon>Burkholderia</taxon>
        <taxon>pseudomallei group</taxon>
    </lineage>
</organism>
<accession>Q2SY23</accession>
<comment type="function">
    <text evidence="1">This protein is one of the two subunits of integration host factor, a specific DNA-binding protein that functions in genetic recombination as well as in transcriptional and translational control.</text>
</comment>
<comment type="subunit">
    <text evidence="1">Heterodimer of an alpha and a beta chain.</text>
</comment>
<comment type="similarity">
    <text evidence="1">Belongs to the bacterial histone-like protein family.</text>
</comment>
<gene>
    <name evidence="1" type="primary">ihfB</name>
    <name evidence="1" type="synonym">himD</name>
    <name type="ordered locus">BTH_I1639</name>
</gene>
<dbReference type="EMBL" id="CP000086">
    <property type="protein sequence ID" value="ABC38653.1"/>
    <property type="molecule type" value="Genomic_DNA"/>
</dbReference>
<dbReference type="RefSeq" id="WP_009889848.1">
    <property type="nucleotide sequence ID" value="NZ_CP008785.1"/>
</dbReference>
<dbReference type="SMR" id="Q2SY23"/>
<dbReference type="GeneID" id="45121370"/>
<dbReference type="KEGG" id="bte:BTH_I1639"/>
<dbReference type="HOGENOM" id="CLU_105066_2_0_4"/>
<dbReference type="Proteomes" id="UP000001930">
    <property type="component" value="Chromosome I"/>
</dbReference>
<dbReference type="GO" id="GO:0005694">
    <property type="term" value="C:chromosome"/>
    <property type="evidence" value="ECO:0007669"/>
    <property type="project" value="InterPro"/>
</dbReference>
<dbReference type="GO" id="GO:0005829">
    <property type="term" value="C:cytosol"/>
    <property type="evidence" value="ECO:0007669"/>
    <property type="project" value="TreeGrafter"/>
</dbReference>
<dbReference type="GO" id="GO:0003677">
    <property type="term" value="F:DNA binding"/>
    <property type="evidence" value="ECO:0007669"/>
    <property type="project" value="UniProtKB-UniRule"/>
</dbReference>
<dbReference type="GO" id="GO:0030527">
    <property type="term" value="F:structural constituent of chromatin"/>
    <property type="evidence" value="ECO:0007669"/>
    <property type="project" value="InterPro"/>
</dbReference>
<dbReference type="GO" id="GO:0006310">
    <property type="term" value="P:DNA recombination"/>
    <property type="evidence" value="ECO:0007669"/>
    <property type="project" value="UniProtKB-UniRule"/>
</dbReference>
<dbReference type="GO" id="GO:0006355">
    <property type="term" value="P:regulation of DNA-templated transcription"/>
    <property type="evidence" value="ECO:0007669"/>
    <property type="project" value="UniProtKB-UniRule"/>
</dbReference>
<dbReference type="GO" id="GO:0006417">
    <property type="term" value="P:regulation of translation"/>
    <property type="evidence" value="ECO:0007669"/>
    <property type="project" value="UniProtKB-UniRule"/>
</dbReference>
<dbReference type="CDD" id="cd13836">
    <property type="entry name" value="IHF_B"/>
    <property type="match status" value="1"/>
</dbReference>
<dbReference type="Gene3D" id="4.10.520.10">
    <property type="entry name" value="IHF-like DNA-binding proteins"/>
    <property type="match status" value="1"/>
</dbReference>
<dbReference type="HAMAP" id="MF_00381">
    <property type="entry name" value="IHF_beta"/>
    <property type="match status" value="1"/>
</dbReference>
<dbReference type="InterPro" id="IPR000119">
    <property type="entry name" value="Hist_DNA-bd"/>
</dbReference>
<dbReference type="InterPro" id="IPR010992">
    <property type="entry name" value="IHF-like_DNA-bd_dom_sf"/>
</dbReference>
<dbReference type="InterPro" id="IPR005685">
    <property type="entry name" value="IHF_beta"/>
</dbReference>
<dbReference type="NCBIfam" id="TIGR00988">
    <property type="entry name" value="hip"/>
    <property type="match status" value="1"/>
</dbReference>
<dbReference type="NCBIfam" id="NF001222">
    <property type="entry name" value="PRK00199.1"/>
    <property type="match status" value="1"/>
</dbReference>
<dbReference type="PANTHER" id="PTHR33175">
    <property type="entry name" value="DNA-BINDING PROTEIN HU"/>
    <property type="match status" value="1"/>
</dbReference>
<dbReference type="PANTHER" id="PTHR33175:SF5">
    <property type="entry name" value="INTEGRATION HOST FACTOR SUBUNIT BETA"/>
    <property type="match status" value="1"/>
</dbReference>
<dbReference type="Pfam" id="PF00216">
    <property type="entry name" value="Bac_DNA_binding"/>
    <property type="match status" value="1"/>
</dbReference>
<dbReference type="PRINTS" id="PR01727">
    <property type="entry name" value="DNABINDINGHU"/>
</dbReference>
<dbReference type="SMART" id="SM00411">
    <property type="entry name" value="BHL"/>
    <property type="match status" value="1"/>
</dbReference>
<dbReference type="SUPFAM" id="SSF47729">
    <property type="entry name" value="IHF-like DNA-binding proteins"/>
    <property type="match status" value="1"/>
</dbReference>
<sequence length="107" mass="11904">MTKSELVAQLASRFPQLVLKDADFAVKTMLDAMSDALSKGHRIEIRGFGSFGLNRRPARVGRNPKSGEKVQVPEKHVPHFKPGKELRERVDGRAGEPLKNDEPEDGQ</sequence>
<proteinExistence type="inferred from homology"/>
<protein>
    <recommendedName>
        <fullName evidence="1">Integration host factor subunit beta</fullName>
        <shortName evidence="1">IHF-beta</shortName>
    </recommendedName>
</protein>